<dbReference type="EC" id="4.2.1.2" evidence="1"/>
<dbReference type="EMBL" id="AE017143">
    <property type="protein sequence ID" value="AAP96703.1"/>
    <property type="molecule type" value="Genomic_DNA"/>
</dbReference>
<dbReference type="RefSeq" id="WP_010945724.1">
    <property type="nucleotide sequence ID" value="NC_002940.2"/>
</dbReference>
<dbReference type="SMR" id="Q7VKC9"/>
<dbReference type="STRING" id="233412.HD_1986"/>
<dbReference type="KEGG" id="hdu:HD_1986"/>
<dbReference type="eggNOG" id="COG0114">
    <property type="taxonomic scope" value="Bacteria"/>
</dbReference>
<dbReference type="HOGENOM" id="CLU_021594_4_1_6"/>
<dbReference type="OrthoDB" id="9802809at2"/>
<dbReference type="UniPathway" id="UPA00223">
    <property type="reaction ID" value="UER01007"/>
</dbReference>
<dbReference type="Proteomes" id="UP000001022">
    <property type="component" value="Chromosome"/>
</dbReference>
<dbReference type="GO" id="GO:0005737">
    <property type="term" value="C:cytoplasm"/>
    <property type="evidence" value="ECO:0007669"/>
    <property type="project" value="UniProtKB-SubCell"/>
</dbReference>
<dbReference type="GO" id="GO:0004333">
    <property type="term" value="F:fumarate hydratase activity"/>
    <property type="evidence" value="ECO:0007669"/>
    <property type="project" value="UniProtKB-UniRule"/>
</dbReference>
<dbReference type="GO" id="GO:0006106">
    <property type="term" value="P:fumarate metabolic process"/>
    <property type="evidence" value="ECO:0007669"/>
    <property type="project" value="InterPro"/>
</dbReference>
<dbReference type="GO" id="GO:0006108">
    <property type="term" value="P:malate metabolic process"/>
    <property type="evidence" value="ECO:0007669"/>
    <property type="project" value="TreeGrafter"/>
</dbReference>
<dbReference type="GO" id="GO:0006099">
    <property type="term" value="P:tricarboxylic acid cycle"/>
    <property type="evidence" value="ECO:0007669"/>
    <property type="project" value="UniProtKB-UniRule"/>
</dbReference>
<dbReference type="CDD" id="cd01362">
    <property type="entry name" value="Fumarase_classII"/>
    <property type="match status" value="1"/>
</dbReference>
<dbReference type="FunFam" id="1.10.40.30:FF:000002">
    <property type="entry name" value="Fumarate hydratase class II"/>
    <property type="match status" value="1"/>
</dbReference>
<dbReference type="FunFam" id="1.10.275.10:FF:000001">
    <property type="entry name" value="Fumarate hydratase, mitochondrial"/>
    <property type="match status" value="1"/>
</dbReference>
<dbReference type="FunFam" id="1.20.200.10:FF:000001">
    <property type="entry name" value="Fumarate hydratase, mitochondrial"/>
    <property type="match status" value="1"/>
</dbReference>
<dbReference type="Gene3D" id="1.10.40.30">
    <property type="entry name" value="Fumarase/aspartase (C-terminal domain)"/>
    <property type="match status" value="1"/>
</dbReference>
<dbReference type="Gene3D" id="1.20.200.10">
    <property type="entry name" value="Fumarase/aspartase (Central domain)"/>
    <property type="match status" value="1"/>
</dbReference>
<dbReference type="Gene3D" id="1.10.275.10">
    <property type="entry name" value="Fumarase/aspartase (N-terminal domain)"/>
    <property type="match status" value="1"/>
</dbReference>
<dbReference type="HAMAP" id="MF_00743">
    <property type="entry name" value="FumaraseC"/>
    <property type="match status" value="1"/>
</dbReference>
<dbReference type="InterPro" id="IPR005677">
    <property type="entry name" value="Fum_hydII"/>
</dbReference>
<dbReference type="InterPro" id="IPR024083">
    <property type="entry name" value="Fumarase/histidase_N"/>
</dbReference>
<dbReference type="InterPro" id="IPR018951">
    <property type="entry name" value="Fumarase_C_C"/>
</dbReference>
<dbReference type="InterPro" id="IPR020557">
    <property type="entry name" value="Fumarate_lyase_CS"/>
</dbReference>
<dbReference type="InterPro" id="IPR000362">
    <property type="entry name" value="Fumarate_lyase_fam"/>
</dbReference>
<dbReference type="InterPro" id="IPR022761">
    <property type="entry name" value="Fumarate_lyase_N"/>
</dbReference>
<dbReference type="InterPro" id="IPR008948">
    <property type="entry name" value="L-Aspartase-like"/>
</dbReference>
<dbReference type="NCBIfam" id="TIGR00979">
    <property type="entry name" value="fumC_II"/>
    <property type="match status" value="1"/>
</dbReference>
<dbReference type="NCBIfam" id="NF008909">
    <property type="entry name" value="PRK12273.1"/>
    <property type="match status" value="1"/>
</dbReference>
<dbReference type="PANTHER" id="PTHR11444">
    <property type="entry name" value="ASPARTATEAMMONIA/ARGININOSUCCINATE/ADENYLOSUCCINATE LYASE"/>
    <property type="match status" value="1"/>
</dbReference>
<dbReference type="PANTHER" id="PTHR11444:SF1">
    <property type="entry name" value="FUMARATE HYDRATASE, MITOCHONDRIAL"/>
    <property type="match status" value="1"/>
</dbReference>
<dbReference type="Pfam" id="PF10415">
    <property type="entry name" value="FumaraseC_C"/>
    <property type="match status" value="1"/>
</dbReference>
<dbReference type="Pfam" id="PF00206">
    <property type="entry name" value="Lyase_1"/>
    <property type="match status" value="1"/>
</dbReference>
<dbReference type="PRINTS" id="PR00149">
    <property type="entry name" value="FUMRATELYASE"/>
</dbReference>
<dbReference type="SUPFAM" id="SSF48557">
    <property type="entry name" value="L-aspartase-like"/>
    <property type="match status" value="1"/>
</dbReference>
<dbReference type="PROSITE" id="PS00163">
    <property type="entry name" value="FUMARATE_LYASES"/>
    <property type="match status" value="1"/>
</dbReference>
<comment type="function">
    <text evidence="1">Involved in the TCA cycle. Catalyzes the stereospecific interconversion of fumarate to L-malate.</text>
</comment>
<comment type="catalytic activity">
    <reaction evidence="1">
        <text>(S)-malate = fumarate + H2O</text>
        <dbReference type="Rhea" id="RHEA:12460"/>
        <dbReference type="ChEBI" id="CHEBI:15377"/>
        <dbReference type="ChEBI" id="CHEBI:15589"/>
        <dbReference type="ChEBI" id="CHEBI:29806"/>
        <dbReference type="EC" id="4.2.1.2"/>
    </reaction>
</comment>
<comment type="pathway">
    <text evidence="1">Carbohydrate metabolism; tricarboxylic acid cycle; (S)-malate from fumarate: step 1/1.</text>
</comment>
<comment type="subunit">
    <text evidence="1">Homotetramer.</text>
</comment>
<comment type="subcellular location">
    <subcellularLocation>
        <location evidence="1">Cytoplasm</location>
    </subcellularLocation>
</comment>
<comment type="miscellaneous">
    <text evidence="1">There are 2 substrate-binding sites: the catalytic A site, and the non-catalytic B site that may play a role in the transfer of substrate or product between the active site and the solvent. Alternatively, the B site may bind allosteric effectors.</text>
</comment>
<comment type="similarity">
    <text evidence="1">Belongs to the class-II fumarase/aspartase family. Fumarase subfamily.</text>
</comment>
<proteinExistence type="inferred from homology"/>
<organism>
    <name type="scientific">Haemophilus ducreyi (strain 35000HP / ATCC 700724)</name>
    <dbReference type="NCBI Taxonomy" id="233412"/>
    <lineage>
        <taxon>Bacteria</taxon>
        <taxon>Pseudomonadati</taxon>
        <taxon>Pseudomonadota</taxon>
        <taxon>Gammaproteobacteria</taxon>
        <taxon>Pasteurellales</taxon>
        <taxon>Pasteurellaceae</taxon>
        <taxon>Haemophilus</taxon>
    </lineage>
</organism>
<protein>
    <recommendedName>
        <fullName evidence="1">Fumarate hydratase class II</fullName>
        <shortName evidence="1">Fumarase C</shortName>
        <ecNumber evidence="1">4.2.1.2</ecNumber>
    </recommendedName>
    <alternativeName>
        <fullName evidence="1">Aerobic fumarase</fullName>
    </alternativeName>
    <alternativeName>
        <fullName evidence="1">Iron-independent fumarase</fullName>
    </alternativeName>
</protein>
<gene>
    <name evidence="1" type="primary">fumC</name>
    <name type="ordered locus">HD_1986</name>
</gene>
<evidence type="ECO:0000255" key="1">
    <source>
        <dbReference type="HAMAP-Rule" id="MF_00743"/>
    </source>
</evidence>
<accession>Q7VKC9</accession>
<reference key="1">
    <citation type="submission" date="2003-06" db="EMBL/GenBank/DDBJ databases">
        <title>The complete genome sequence of Haemophilus ducreyi.</title>
        <authorList>
            <person name="Munson R.S. Jr."/>
            <person name="Ray W.C."/>
            <person name="Mahairas G."/>
            <person name="Sabo P."/>
            <person name="Mungur R."/>
            <person name="Johnson L."/>
            <person name="Nguyen D."/>
            <person name="Wang J."/>
            <person name="Forst C."/>
            <person name="Hood L."/>
        </authorList>
    </citation>
    <scope>NUCLEOTIDE SEQUENCE [LARGE SCALE GENOMIC DNA]</scope>
    <source>
        <strain>35000HP / ATCC 700724</strain>
    </source>
</reference>
<sequence>MEYRIEKDTMGEVKVPADRYWAAQTERSRNNFRIGPEASMPVEIIEAFAYLKKAAAFANAELGALTTEKRDLIAMVCDEILANKLADEFPLVIWQTGSGTQSNMNLNEVIANRAHVLQGGALGEKSIIHPNDDVNKSQSSNDTYPTAMHIAAYKKVVEVTIPAIERLQKTFAIKSEAFKDVVKIGRTHLMDATPLTLGQEFSAYAAQLQFGLLALKNTLPHLAQLALGGTAVGTGLNTPKGYDVKVAEYIAQFTQLPFITAENKFEALATHDAIIETHGALKQIAMSLFKIANDIRLLASGPRSGIGEILIPENEPGSSIMPGKVNPTQCEAMTMVAAQVLGNDTTISFAGSQGHFQLNVFKPVMAANFLQSAQLLADVCISFDEHCASGIEPNYPRIQQQLENSLMLVTALNTHIGYENAAKIAKTAHKNGTTLKEEAINLGLVTAEQFDQWVRPQNMVGSLK</sequence>
<feature type="chain" id="PRO_0000161278" description="Fumarate hydratase class II">
    <location>
        <begin position="1"/>
        <end position="464"/>
    </location>
</feature>
<feature type="active site" description="Proton donor/acceptor" evidence="1">
    <location>
        <position position="188"/>
    </location>
</feature>
<feature type="active site" evidence="1">
    <location>
        <position position="318"/>
    </location>
</feature>
<feature type="binding site" evidence="1">
    <location>
        <begin position="98"/>
        <end position="100"/>
    </location>
    <ligand>
        <name>substrate</name>
    </ligand>
</feature>
<feature type="binding site" description="in site B" evidence="1">
    <location>
        <begin position="129"/>
        <end position="132"/>
    </location>
    <ligand>
        <name>substrate</name>
    </ligand>
</feature>
<feature type="binding site" evidence="1">
    <location>
        <begin position="139"/>
        <end position="141"/>
    </location>
    <ligand>
        <name>substrate</name>
    </ligand>
</feature>
<feature type="binding site" evidence="1">
    <location>
        <position position="187"/>
    </location>
    <ligand>
        <name>substrate</name>
    </ligand>
</feature>
<feature type="binding site" evidence="1">
    <location>
        <position position="319"/>
    </location>
    <ligand>
        <name>substrate</name>
    </ligand>
</feature>
<feature type="binding site" evidence="1">
    <location>
        <begin position="324"/>
        <end position="326"/>
    </location>
    <ligand>
        <name>substrate</name>
    </ligand>
</feature>
<feature type="site" description="Important for catalytic activity" evidence="1">
    <location>
        <position position="331"/>
    </location>
</feature>
<name>FUMC_HAEDU</name>
<keyword id="KW-0963">Cytoplasm</keyword>
<keyword id="KW-0456">Lyase</keyword>
<keyword id="KW-1185">Reference proteome</keyword>
<keyword id="KW-0816">Tricarboxylic acid cycle</keyword>